<evidence type="ECO:0000250" key="1"/>
<evidence type="ECO:0000255" key="2"/>
<evidence type="ECO:0000303" key="3">
    <source>
    </source>
</evidence>
<evidence type="ECO:0000305" key="4"/>
<gene>
    <name evidence="3" type="primary">ACA10</name>
    <name type="ordered locus">Os12g0586600</name>
    <name type="ordered locus">LOC_Os12g39660</name>
    <name type="ORF">OsJ_36685</name>
</gene>
<organism>
    <name type="scientific">Oryza sativa subsp. japonica</name>
    <name type="common">Rice</name>
    <dbReference type="NCBI Taxonomy" id="39947"/>
    <lineage>
        <taxon>Eukaryota</taxon>
        <taxon>Viridiplantae</taxon>
        <taxon>Streptophyta</taxon>
        <taxon>Embryophyta</taxon>
        <taxon>Tracheophyta</taxon>
        <taxon>Spermatophyta</taxon>
        <taxon>Magnoliopsida</taxon>
        <taxon>Liliopsida</taxon>
        <taxon>Poales</taxon>
        <taxon>Poaceae</taxon>
        <taxon>BOP clade</taxon>
        <taxon>Oryzoideae</taxon>
        <taxon>Oryzeae</taxon>
        <taxon>Oryzinae</taxon>
        <taxon>Oryza</taxon>
        <taxon>Oryza sativa</taxon>
    </lineage>
</organism>
<comment type="function">
    <text evidence="1">This magnesium-dependent enzyme catalyzes the hydrolysis of ATP coupled with the translocation of calcium from the cytosol out of the cell, into the endoplasmic reticulum, or into organelles.</text>
</comment>
<comment type="catalytic activity">
    <reaction>
        <text>Ca(2+)(in) + ATP + H2O = Ca(2+)(out) + ADP + phosphate + H(+)</text>
        <dbReference type="Rhea" id="RHEA:18105"/>
        <dbReference type="ChEBI" id="CHEBI:15377"/>
        <dbReference type="ChEBI" id="CHEBI:15378"/>
        <dbReference type="ChEBI" id="CHEBI:29108"/>
        <dbReference type="ChEBI" id="CHEBI:30616"/>
        <dbReference type="ChEBI" id="CHEBI:43474"/>
        <dbReference type="ChEBI" id="CHEBI:456216"/>
        <dbReference type="EC" id="7.2.2.10"/>
    </reaction>
</comment>
<comment type="activity regulation">
    <text evidence="1">Activated by calmodulin.</text>
</comment>
<comment type="subcellular location">
    <subcellularLocation>
        <location evidence="1">Membrane</location>
        <topology evidence="1">Multi-pass membrane protein</topology>
    </subcellularLocation>
</comment>
<comment type="domain">
    <text evidence="1">The N-terminus contains an autoinhibitory calmodulin-binding domain, which binds calmodulin in a calcium-dependent fashion.</text>
</comment>
<comment type="similarity">
    <text evidence="4">Belongs to the cation transport ATPase (P-type) (TC 3.A.3) family. Type IIB subfamily.</text>
</comment>
<proteinExistence type="evidence at transcript level"/>
<feature type="chain" id="PRO_0000247300" description="Calcium-transporting ATPase 10, plasma membrane-type">
    <location>
        <begin position="1"/>
        <end position="1020"/>
    </location>
</feature>
<feature type="topological domain" description="Cytoplasmic" evidence="2">
    <location>
        <begin position="1"/>
        <end position="175"/>
    </location>
</feature>
<feature type="transmembrane region" description="Helical" evidence="2">
    <location>
        <begin position="176"/>
        <end position="196"/>
    </location>
</feature>
<feature type="transmembrane region" description="Helical" evidence="2">
    <location>
        <begin position="199"/>
        <end position="219"/>
    </location>
</feature>
<feature type="topological domain" description="Cytoplasmic" evidence="2">
    <location>
        <begin position="220"/>
        <end position="263"/>
    </location>
</feature>
<feature type="transmembrane region" description="Helical" evidence="2">
    <location>
        <begin position="264"/>
        <end position="284"/>
    </location>
</feature>
<feature type="transmembrane region" description="Helical" evidence="2">
    <location>
        <begin position="352"/>
        <end position="372"/>
    </location>
</feature>
<feature type="topological domain" description="Cytoplasmic" evidence="2">
    <location>
        <begin position="373"/>
        <end position="400"/>
    </location>
</feature>
<feature type="transmembrane region" description="Helical" evidence="2">
    <location>
        <begin position="401"/>
        <end position="421"/>
    </location>
</feature>
<feature type="transmembrane region" description="Helical" evidence="2">
    <location>
        <begin position="843"/>
        <end position="863"/>
    </location>
</feature>
<feature type="topological domain" description="Cytoplasmic" evidence="2">
    <location>
        <begin position="864"/>
        <end position="887"/>
    </location>
</feature>
<feature type="transmembrane region" description="Helical" evidence="2">
    <location>
        <begin position="888"/>
        <end position="907"/>
    </location>
</feature>
<feature type="transmembrane region" description="Helical" evidence="2">
    <location>
        <begin position="924"/>
        <end position="944"/>
    </location>
</feature>
<feature type="topological domain" description="Cytoplasmic" evidence="2">
    <location>
        <begin position="945"/>
        <end position="961"/>
    </location>
</feature>
<feature type="transmembrane region" description="Helical" evidence="2">
    <location>
        <begin position="962"/>
        <end position="982"/>
    </location>
</feature>
<feature type="transmembrane region" description="Helical" evidence="2">
    <location>
        <begin position="995"/>
        <end position="1015"/>
    </location>
</feature>
<feature type="topological domain" description="Cytoplasmic" evidence="2">
    <location>
        <begin position="1016"/>
        <end position="1020"/>
    </location>
</feature>
<feature type="region of interest" description="Interaction with calmodulin" evidence="1">
    <location>
        <begin position="21"/>
        <end position="32"/>
    </location>
</feature>
<feature type="active site" description="4-aspartylphosphate intermediate" evidence="1">
    <location>
        <position position="456"/>
    </location>
</feature>
<feature type="binding site" evidence="1">
    <location>
        <position position="758"/>
    </location>
    <ligand>
        <name>Mg(2+)</name>
        <dbReference type="ChEBI" id="CHEBI:18420"/>
    </ligand>
</feature>
<feature type="binding site" evidence="1">
    <location>
        <position position="762"/>
    </location>
    <ligand>
        <name>Mg(2+)</name>
        <dbReference type="ChEBI" id="CHEBI:18420"/>
    </ligand>
</feature>
<sequence>MESYLEENFGGVKAKNSSEEALRRWRKLCGVVKNPKRRFRFTANLDKRGEAQAIKHANHEKLRVAVLVSKAALQFIQGLSLRSEYVVPEEVKAAGFQICADELGSIVEGHDSKKLITHGGVTGIADKLATSPADGLSTAEESIKRRQDVYGLNKFTESEVRSFWVFVWEALQDTTLIILAVCAFVSLVVGIAMEGWPKGAHDGLGIVASILLVVFVTATSDYRQSLQFKDLDKEKKKIQVQVTRNGFRQRLSIYDLLPGDVVHLAIGDQVPADGLFISGFSLLINESSLTGESEPVVVNEDNPFLLSGTKVQDGSCKMLITTVGMRTQWGKLMATLSEGGDDETPLQVKLNGVATIIGKIGLFFAVITFIVLSQGLISKKYHEGLLLSWSGDDALEMLEHFAIAVTIVVVAVPEGLPLAVTLSLAFAMKKMMNDKALVRHLAACETMGSATTICSDKTGTLTTNHMTVVKACICGNIKEVNNPKNASDLCSELPETVVKTLLESIFNNTGGEVVIDQDGKYQILGTPTETALLEFALSLGGNFKAKRDETKIVKMEPFNSTKKRMCVVLKLPGGGCRAHCKGASEIVLAACDKFMDETGAVVPLDKTTADKLNGIIESFANEALRTLCLGYREMEEGFSVEEQIPLQGYTCIGIVGIKDPVRPGVRESVATCRSAGIMVRMVTGDNINTAKAIARECGILTEDGLAIEGPEFREKSLDELLKLIPKIQVMARSSPLDKHTLVKHLRTTFNEVVAVTGDGTNDAPALHEADIGLAMGIAGTEVAKESADVIILDDNFSTIVTVAKWGRSVYVNIQKFVQFQLTVNVVALLVNFSSACFTGNAPLTAVQLLWVNMIMDTLGALALATEPPNDDLMKREPVGRTGKFITNVMWRNILGQSFYQFIVMWYLQTQGKSMFGLDGPDAEVVLNTIIFNSFVFCQVFNEISSREMEKINVLRGILKNYVFLGVLTSTVVFQFIMVQFLGEFANTIPLTRLQWIASVLLGLIGMPISAIIKLLPVGSS</sequence>
<dbReference type="EC" id="7.2.2.10"/>
<dbReference type="EMBL" id="DP000011">
    <property type="protein sequence ID" value="ABA99736.1"/>
    <property type="molecule type" value="Genomic_DNA"/>
</dbReference>
<dbReference type="EMBL" id="AP008218">
    <property type="protein sequence ID" value="BAF30178.1"/>
    <property type="molecule type" value="Genomic_DNA"/>
</dbReference>
<dbReference type="EMBL" id="AP014968">
    <property type="protein sequence ID" value="BAT17855.1"/>
    <property type="molecule type" value="Genomic_DNA"/>
</dbReference>
<dbReference type="EMBL" id="CM000149">
    <property type="protein sequence ID" value="EAZ21038.1"/>
    <property type="molecule type" value="Genomic_DNA"/>
</dbReference>
<dbReference type="EMBL" id="AK066259">
    <property type="protein sequence ID" value="BAG89887.1"/>
    <property type="molecule type" value="mRNA"/>
</dbReference>
<dbReference type="RefSeq" id="XP_015620081.1">
    <property type="nucleotide sequence ID" value="XM_015764595.1"/>
</dbReference>
<dbReference type="SMR" id="Q2QMX9"/>
<dbReference type="FunCoup" id="Q2QMX9">
    <property type="interactions" value="2251"/>
</dbReference>
<dbReference type="STRING" id="39947.Q2QMX9"/>
<dbReference type="PaxDb" id="39947-Q2QMX9"/>
<dbReference type="EnsemblPlants" id="Os12t0586600-01">
    <property type="protein sequence ID" value="Os12t0586600-01"/>
    <property type="gene ID" value="Os12g0586600"/>
</dbReference>
<dbReference type="Gramene" id="Os12t0586600-01">
    <property type="protein sequence ID" value="Os12t0586600-01"/>
    <property type="gene ID" value="Os12g0586600"/>
</dbReference>
<dbReference type="KEGG" id="dosa:Os12g0586600"/>
<dbReference type="eggNOG" id="KOG0204">
    <property type="taxonomic scope" value="Eukaryota"/>
</dbReference>
<dbReference type="InParanoid" id="Q2QMX9"/>
<dbReference type="OMA" id="YQFIVMW"/>
<dbReference type="OrthoDB" id="3352408at2759"/>
<dbReference type="Proteomes" id="UP000000763">
    <property type="component" value="Chromosome 12"/>
</dbReference>
<dbReference type="Proteomes" id="UP000007752">
    <property type="component" value="Chromosome 12"/>
</dbReference>
<dbReference type="Proteomes" id="UP000059680">
    <property type="component" value="Chromosome 12"/>
</dbReference>
<dbReference type="ExpressionAtlas" id="Q2QMX9">
    <property type="expression patterns" value="baseline and differential"/>
</dbReference>
<dbReference type="GO" id="GO:0043231">
    <property type="term" value="C:intracellular membrane-bounded organelle"/>
    <property type="evidence" value="ECO:0000318"/>
    <property type="project" value="GO_Central"/>
</dbReference>
<dbReference type="GO" id="GO:0005886">
    <property type="term" value="C:plasma membrane"/>
    <property type="evidence" value="ECO:0000318"/>
    <property type="project" value="GO_Central"/>
</dbReference>
<dbReference type="GO" id="GO:0005524">
    <property type="term" value="F:ATP binding"/>
    <property type="evidence" value="ECO:0007669"/>
    <property type="project" value="UniProtKB-KW"/>
</dbReference>
<dbReference type="GO" id="GO:0016887">
    <property type="term" value="F:ATP hydrolysis activity"/>
    <property type="evidence" value="ECO:0007669"/>
    <property type="project" value="InterPro"/>
</dbReference>
<dbReference type="GO" id="GO:0005516">
    <property type="term" value="F:calmodulin binding"/>
    <property type="evidence" value="ECO:0007669"/>
    <property type="project" value="UniProtKB-KW"/>
</dbReference>
<dbReference type="GO" id="GO:0046872">
    <property type="term" value="F:metal ion binding"/>
    <property type="evidence" value="ECO:0007669"/>
    <property type="project" value="UniProtKB-KW"/>
</dbReference>
<dbReference type="GO" id="GO:0005388">
    <property type="term" value="F:P-type calcium transporter activity"/>
    <property type="evidence" value="ECO:0000318"/>
    <property type="project" value="GO_Central"/>
</dbReference>
<dbReference type="CDD" id="cd02081">
    <property type="entry name" value="P-type_ATPase_Ca_PMCA-like"/>
    <property type="match status" value="1"/>
</dbReference>
<dbReference type="FunFam" id="1.20.1110.10:FF:000039">
    <property type="entry name" value="Calcium-transporting ATPase"/>
    <property type="match status" value="1"/>
</dbReference>
<dbReference type="FunFam" id="1.20.5.170:FF:000026">
    <property type="entry name" value="Calcium-transporting ATPase"/>
    <property type="match status" value="1"/>
</dbReference>
<dbReference type="FunFam" id="2.70.150.10:FF:000006">
    <property type="entry name" value="Calcium-transporting ATPase"/>
    <property type="match status" value="1"/>
</dbReference>
<dbReference type="FunFam" id="3.40.1110.10:FF:000011">
    <property type="entry name" value="Calcium-transporting ATPase"/>
    <property type="match status" value="1"/>
</dbReference>
<dbReference type="FunFam" id="3.40.50.1000:FF:000011">
    <property type="entry name" value="Calcium-transporting ATPase"/>
    <property type="match status" value="1"/>
</dbReference>
<dbReference type="Gene3D" id="1.20.5.170">
    <property type="match status" value="1"/>
</dbReference>
<dbReference type="Gene3D" id="3.40.1110.10">
    <property type="entry name" value="Calcium-transporting ATPase, cytoplasmic domain N"/>
    <property type="match status" value="1"/>
</dbReference>
<dbReference type="Gene3D" id="2.70.150.10">
    <property type="entry name" value="Calcium-transporting ATPase, cytoplasmic transduction domain A"/>
    <property type="match status" value="1"/>
</dbReference>
<dbReference type="Gene3D" id="1.20.1110.10">
    <property type="entry name" value="Calcium-transporting ATPase, transmembrane domain"/>
    <property type="match status" value="1"/>
</dbReference>
<dbReference type="Gene3D" id="3.40.50.1000">
    <property type="entry name" value="HAD superfamily/HAD-like"/>
    <property type="match status" value="1"/>
</dbReference>
<dbReference type="InterPro" id="IPR006068">
    <property type="entry name" value="ATPase_P-typ_cation-transptr_C"/>
</dbReference>
<dbReference type="InterPro" id="IPR004014">
    <property type="entry name" value="ATPase_P-typ_cation-transptr_N"/>
</dbReference>
<dbReference type="InterPro" id="IPR023299">
    <property type="entry name" value="ATPase_P-typ_cyto_dom_N"/>
</dbReference>
<dbReference type="InterPro" id="IPR018303">
    <property type="entry name" value="ATPase_P-typ_P_site"/>
</dbReference>
<dbReference type="InterPro" id="IPR023298">
    <property type="entry name" value="ATPase_P-typ_TM_dom_sf"/>
</dbReference>
<dbReference type="InterPro" id="IPR008250">
    <property type="entry name" value="ATPase_P-typ_transduc_dom_A_sf"/>
</dbReference>
<dbReference type="InterPro" id="IPR024750">
    <property type="entry name" value="Ca_ATPase_N_dom"/>
</dbReference>
<dbReference type="InterPro" id="IPR036412">
    <property type="entry name" value="HAD-like_sf"/>
</dbReference>
<dbReference type="InterPro" id="IPR023214">
    <property type="entry name" value="HAD_sf"/>
</dbReference>
<dbReference type="InterPro" id="IPR006408">
    <property type="entry name" value="P-type_ATPase_IIB"/>
</dbReference>
<dbReference type="InterPro" id="IPR001757">
    <property type="entry name" value="P_typ_ATPase"/>
</dbReference>
<dbReference type="InterPro" id="IPR044492">
    <property type="entry name" value="P_typ_ATPase_HD_dom"/>
</dbReference>
<dbReference type="NCBIfam" id="TIGR01517">
    <property type="entry name" value="ATPase-IIB_Ca"/>
    <property type="match status" value="1"/>
</dbReference>
<dbReference type="NCBIfam" id="TIGR01494">
    <property type="entry name" value="ATPase_P-type"/>
    <property type="match status" value="3"/>
</dbReference>
<dbReference type="PANTHER" id="PTHR24093:SF531">
    <property type="entry name" value="CALCIUM-TRANSPORTING ATPASE 10, PLASMA MEMBRANE-TYPE"/>
    <property type="match status" value="1"/>
</dbReference>
<dbReference type="PANTHER" id="PTHR24093">
    <property type="entry name" value="CATION TRANSPORTING ATPASE"/>
    <property type="match status" value="1"/>
</dbReference>
<dbReference type="Pfam" id="PF12515">
    <property type="entry name" value="CaATP_NAI"/>
    <property type="match status" value="1"/>
</dbReference>
<dbReference type="Pfam" id="PF13246">
    <property type="entry name" value="Cation_ATPase"/>
    <property type="match status" value="1"/>
</dbReference>
<dbReference type="Pfam" id="PF00689">
    <property type="entry name" value="Cation_ATPase_C"/>
    <property type="match status" value="1"/>
</dbReference>
<dbReference type="Pfam" id="PF00690">
    <property type="entry name" value="Cation_ATPase_N"/>
    <property type="match status" value="1"/>
</dbReference>
<dbReference type="Pfam" id="PF00122">
    <property type="entry name" value="E1-E2_ATPase"/>
    <property type="match status" value="1"/>
</dbReference>
<dbReference type="Pfam" id="PF00702">
    <property type="entry name" value="Hydrolase"/>
    <property type="match status" value="1"/>
</dbReference>
<dbReference type="PRINTS" id="PR00119">
    <property type="entry name" value="CATATPASE"/>
</dbReference>
<dbReference type="PRINTS" id="PR00120">
    <property type="entry name" value="HATPASE"/>
</dbReference>
<dbReference type="SFLD" id="SFLDS00003">
    <property type="entry name" value="Haloacid_Dehalogenase"/>
    <property type="match status" value="1"/>
</dbReference>
<dbReference type="SFLD" id="SFLDF00027">
    <property type="entry name" value="p-type_atpase"/>
    <property type="match status" value="1"/>
</dbReference>
<dbReference type="SMART" id="SM00831">
    <property type="entry name" value="Cation_ATPase_N"/>
    <property type="match status" value="1"/>
</dbReference>
<dbReference type="SUPFAM" id="SSF81653">
    <property type="entry name" value="Calcium ATPase, transduction domain A"/>
    <property type="match status" value="1"/>
</dbReference>
<dbReference type="SUPFAM" id="SSF81665">
    <property type="entry name" value="Calcium ATPase, transmembrane domain M"/>
    <property type="match status" value="1"/>
</dbReference>
<dbReference type="SUPFAM" id="SSF56784">
    <property type="entry name" value="HAD-like"/>
    <property type="match status" value="1"/>
</dbReference>
<dbReference type="SUPFAM" id="SSF81660">
    <property type="entry name" value="Metal cation-transporting ATPase, ATP-binding domain N"/>
    <property type="match status" value="1"/>
</dbReference>
<dbReference type="PROSITE" id="PS00154">
    <property type="entry name" value="ATPASE_E1_E2"/>
    <property type="match status" value="1"/>
</dbReference>
<keyword id="KW-0067">ATP-binding</keyword>
<keyword id="KW-0106">Calcium</keyword>
<keyword id="KW-0109">Calcium transport</keyword>
<keyword id="KW-0112">Calmodulin-binding</keyword>
<keyword id="KW-0406">Ion transport</keyword>
<keyword id="KW-0460">Magnesium</keyword>
<keyword id="KW-0472">Membrane</keyword>
<keyword id="KW-0479">Metal-binding</keyword>
<keyword id="KW-0547">Nucleotide-binding</keyword>
<keyword id="KW-0597">Phosphoprotein</keyword>
<keyword id="KW-1185">Reference proteome</keyword>
<keyword id="KW-1278">Translocase</keyword>
<keyword id="KW-0812">Transmembrane</keyword>
<keyword id="KW-1133">Transmembrane helix</keyword>
<keyword id="KW-0813">Transport</keyword>
<protein>
    <recommendedName>
        <fullName evidence="4">Calcium-transporting ATPase 10, plasma membrane-type</fullName>
        <shortName evidence="3">OsACA10</shortName>
        <ecNumber>7.2.2.10</ecNumber>
    </recommendedName>
    <alternativeName>
        <fullName evidence="4">Ca(2+)-ATPase isoform 10</fullName>
    </alternativeName>
    <alternativeName>
        <fullName evidence="4">Plastid envelope ATPase 1</fullName>
    </alternativeName>
</protein>
<reference key="1">
    <citation type="journal article" date="2005" name="BMC Biol.">
        <title>The sequence of rice chromosomes 11 and 12, rich in disease resistance genes and recent gene duplications.</title>
        <authorList>
            <consortium name="The rice chromosomes 11 and 12 sequencing consortia"/>
        </authorList>
    </citation>
    <scope>NUCLEOTIDE SEQUENCE [LARGE SCALE GENOMIC DNA]</scope>
    <source>
        <strain>cv. Nipponbare</strain>
    </source>
</reference>
<reference key="2">
    <citation type="journal article" date="2005" name="Nature">
        <title>The map-based sequence of the rice genome.</title>
        <authorList>
            <consortium name="International rice genome sequencing project (IRGSP)"/>
        </authorList>
    </citation>
    <scope>NUCLEOTIDE SEQUENCE [LARGE SCALE GENOMIC DNA]</scope>
    <source>
        <strain>cv. Nipponbare</strain>
    </source>
</reference>
<reference key="3">
    <citation type="journal article" date="2008" name="Nucleic Acids Res.">
        <title>The rice annotation project database (RAP-DB): 2008 update.</title>
        <authorList>
            <consortium name="The rice annotation project (RAP)"/>
        </authorList>
    </citation>
    <scope>GENOME REANNOTATION</scope>
    <source>
        <strain>cv. Nipponbare</strain>
    </source>
</reference>
<reference key="4">
    <citation type="journal article" date="2013" name="Rice">
        <title>Improvement of the Oryza sativa Nipponbare reference genome using next generation sequence and optical map data.</title>
        <authorList>
            <person name="Kawahara Y."/>
            <person name="de la Bastide M."/>
            <person name="Hamilton J.P."/>
            <person name="Kanamori H."/>
            <person name="McCombie W.R."/>
            <person name="Ouyang S."/>
            <person name="Schwartz D.C."/>
            <person name="Tanaka T."/>
            <person name="Wu J."/>
            <person name="Zhou S."/>
            <person name="Childs K.L."/>
            <person name="Davidson R.M."/>
            <person name="Lin H."/>
            <person name="Quesada-Ocampo L."/>
            <person name="Vaillancourt B."/>
            <person name="Sakai H."/>
            <person name="Lee S.S."/>
            <person name="Kim J."/>
            <person name="Numa H."/>
            <person name="Itoh T."/>
            <person name="Buell C.R."/>
            <person name="Matsumoto T."/>
        </authorList>
    </citation>
    <scope>GENOME REANNOTATION</scope>
    <source>
        <strain>cv. Nipponbare</strain>
    </source>
</reference>
<reference key="5">
    <citation type="journal article" date="2005" name="PLoS Biol.">
        <title>The genomes of Oryza sativa: a history of duplications.</title>
        <authorList>
            <person name="Yu J."/>
            <person name="Wang J."/>
            <person name="Lin W."/>
            <person name="Li S."/>
            <person name="Li H."/>
            <person name="Zhou J."/>
            <person name="Ni P."/>
            <person name="Dong W."/>
            <person name="Hu S."/>
            <person name="Zeng C."/>
            <person name="Zhang J."/>
            <person name="Zhang Y."/>
            <person name="Li R."/>
            <person name="Xu Z."/>
            <person name="Li S."/>
            <person name="Li X."/>
            <person name="Zheng H."/>
            <person name="Cong L."/>
            <person name="Lin L."/>
            <person name="Yin J."/>
            <person name="Geng J."/>
            <person name="Li G."/>
            <person name="Shi J."/>
            <person name="Liu J."/>
            <person name="Lv H."/>
            <person name="Li J."/>
            <person name="Wang J."/>
            <person name="Deng Y."/>
            <person name="Ran L."/>
            <person name="Shi X."/>
            <person name="Wang X."/>
            <person name="Wu Q."/>
            <person name="Li C."/>
            <person name="Ren X."/>
            <person name="Wang J."/>
            <person name="Wang X."/>
            <person name="Li D."/>
            <person name="Liu D."/>
            <person name="Zhang X."/>
            <person name="Ji Z."/>
            <person name="Zhao W."/>
            <person name="Sun Y."/>
            <person name="Zhang Z."/>
            <person name="Bao J."/>
            <person name="Han Y."/>
            <person name="Dong L."/>
            <person name="Ji J."/>
            <person name="Chen P."/>
            <person name="Wu S."/>
            <person name="Liu J."/>
            <person name="Xiao Y."/>
            <person name="Bu D."/>
            <person name="Tan J."/>
            <person name="Yang L."/>
            <person name="Ye C."/>
            <person name="Zhang J."/>
            <person name="Xu J."/>
            <person name="Zhou Y."/>
            <person name="Yu Y."/>
            <person name="Zhang B."/>
            <person name="Zhuang S."/>
            <person name="Wei H."/>
            <person name="Liu B."/>
            <person name="Lei M."/>
            <person name="Yu H."/>
            <person name="Li Y."/>
            <person name="Xu H."/>
            <person name="Wei S."/>
            <person name="He X."/>
            <person name="Fang L."/>
            <person name="Zhang Z."/>
            <person name="Zhang Y."/>
            <person name="Huang X."/>
            <person name="Su Z."/>
            <person name="Tong W."/>
            <person name="Li J."/>
            <person name="Tong Z."/>
            <person name="Li S."/>
            <person name="Ye J."/>
            <person name="Wang L."/>
            <person name="Fang L."/>
            <person name="Lei T."/>
            <person name="Chen C.-S."/>
            <person name="Chen H.-C."/>
            <person name="Xu Z."/>
            <person name="Li H."/>
            <person name="Huang H."/>
            <person name="Zhang F."/>
            <person name="Xu H."/>
            <person name="Li N."/>
            <person name="Zhao C."/>
            <person name="Li S."/>
            <person name="Dong L."/>
            <person name="Huang Y."/>
            <person name="Li L."/>
            <person name="Xi Y."/>
            <person name="Qi Q."/>
            <person name="Li W."/>
            <person name="Zhang B."/>
            <person name="Hu W."/>
            <person name="Zhang Y."/>
            <person name="Tian X."/>
            <person name="Jiao Y."/>
            <person name="Liang X."/>
            <person name="Jin J."/>
            <person name="Gao L."/>
            <person name="Zheng W."/>
            <person name="Hao B."/>
            <person name="Liu S.-M."/>
            <person name="Wang W."/>
            <person name="Yuan L."/>
            <person name="Cao M."/>
            <person name="McDermott J."/>
            <person name="Samudrala R."/>
            <person name="Wang J."/>
            <person name="Wong G.K.-S."/>
            <person name="Yang H."/>
        </authorList>
    </citation>
    <scope>NUCLEOTIDE SEQUENCE [LARGE SCALE GENOMIC DNA]</scope>
    <source>
        <strain>cv. Nipponbare</strain>
    </source>
</reference>
<reference key="6">
    <citation type="journal article" date="2003" name="Science">
        <title>Collection, mapping, and annotation of over 28,000 cDNA clones from japonica rice.</title>
        <authorList>
            <consortium name="The rice full-length cDNA consortium"/>
        </authorList>
    </citation>
    <scope>NUCLEOTIDE SEQUENCE [LARGE SCALE MRNA]</scope>
    <source>
        <strain>cv. Nipponbare</strain>
    </source>
</reference>
<reference key="7">
    <citation type="journal article" date="2014" name="FEBS J.">
        <title>Genome-wide expressional and functional analysis of calcium transport elements during abiotic stress and development in rice.</title>
        <authorList>
            <person name="Singh A."/>
            <person name="Kanwar P."/>
            <person name="Yadav A.K."/>
            <person name="Mishra M."/>
            <person name="Jha S.K."/>
            <person name="Baranwal V."/>
            <person name="Pandey A."/>
            <person name="Kapoor S."/>
            <person name="Tyagi A.K."/>
            <person name="Pandey G.K."/>
        </authorList>
    </citation>
    <scope>GENE FAMILY</scope>
    <scope>NOMENCLATURE</scope>
</reference>
<accession>Q2QMX9</accession>
<accession>A0A0P0YBR1</accession>
<accession>Q0IM87</accession>
<name>ACA10_ORYSJ</name>